<accession>Q4JUN0</accession>
<name>GATB_CORJK</name>
<proteinExistence type="inferred from homology"/>
<evidence type="ECO:0000255" key="1">
    <source>
        <dbReference type="HAMAP-Rule" id="MF_00121"/>
    </source>
</evidence>
<reference key="1">
    <citation type="journal article" date="2005" name="J. Bacteriol.">
        <title>Complete genome sequence and analysis of the multiresistant nosocomial pathogen Corynebacterium jeikeium K411, a lipid-requiring bacterium of the human skin flora.</title>
        <authorList>
            <person name="Tauch A."/>
            <person name="Kaiser O."/>
            <person name="Hain T."/>
            <person name="Goesmann A."/>
            <person name="Weisshaar B."/>
            <person name="Albersmeier A."/>
            <person name="Bekel T."/>
            <person name="Bischoff N."/>
            <person name="Brune I."/>
            <person name="Chakraborty T."/>
            <person name="Kalinowski J."/>
            <person name="Meyer F."/>
            <person name="Rupp O."/>
            <person name="Schneiker S."/>
            <person name="Viehoever P."/>
            <person name="Puehler A."/>
        </authorList>
    </citation>
    <scope>NUCLEOTIDE SEQUENCE [LARGE SCALE GENOMIC DNA]</scope>
    <source>
        <strain>K411</strain>
    </source>
</reference>
<feature type="chain" id="PRO_0000241212" description="Aspartyl/glutamyl-tRNA(Asn/Gln) amidotransferase subunit B">
    <location>
        <begin position="1"/>
        <end position="505"/>
    </location>
</feature>
<sequence length="505" mass="55149">MTAPVYDYSDDVMDFDEVLEHFDPVMGMEVHVELATKTKMFSTSSAEFGDAPNSNVDPCSLGLPGALPVVNKLGVEWAIKIGLALNCEIAPKSRFARKNYFYPDQPKNYQISQYDEPIAYDGYLDVVLEDGTEWRVEIERAHMEEDTGKLTHLGGADGRIHGATASLVDCNRAGVPLIEIVTKPIEGAGERAPEVAKAYVSALRDLVKALGVSDARMDQGSMRVDSNLSLRPVGTTEYGTRTETKNINSLKSVEQAVRFEMQRQAACLVNDVEIVQETRHYQETDGTTSKGRPKETMADYRYFNDPDLPPVLAPAEWVEEIRATLPEMPWIRRARIQEEWGLKDEEMRDLVNAGALDLVVDTVEAGAKPDEARSWWVSYLAGKANEQGVELSGLDITPTQVARVASLVNEGKLTTKLARQAVDGVLAGEGDVDEVVAARGLEVVRDDGAIEAAVDEALAANPDIVEKYRAGNKKVTGAIVGAVMKATKGKADPAQVNQLIAKKLS</sequence>
<protein>
    <recommendedName>
        <fullName evidence="1">Aspartyl/glutamyl-tRNA(Asn/Gln) amidotransferase subunit B</fullName>
        <shortName evidence="1">Asp/Glu-ADT subunit B</shortName>
        <ecNumber evidence="1">6.3.5.-</ecNumber>
    </recommendedName>
</protein>
<organism>
    <name type="scientific">Corynebacterium jeikeium (strain K411)</name>
    <dbReference type="NCBI Taxonomy" id="306537"/>
    <lineage>
        <taxon>Bacteria</taxon>
        <taxon>Bacillati</taxon>
        <taxon>Actinomycetota</taxon>
        <taxon>Actinomycetes</taxon>
        <taxon>Mycobacteriales</taxon>
        <taxon>Corynebacteriaceae</taxon>
        <taxon>Corynebacterium</taxon>
    </lineage>
</organism>
<dbReference type="EC" id="6.3.5.-" evidence="1"/>
<dbReference type="EMBL" id="CR931997">
    <property type="protein sequence ID" value="CAI37477.1"/>
    <property type="molecule type" value="Genomic_DNA"/>
</dbReference>
<dbReference type="SMR" id="Q4JUN0"/>
<dbReference type="STRING" id="306537.jk1306"/>
<dbReference type="KEGG" id="cjk:jk1306"/>
<dbReference type="eggNOG" id="COG0064">
    <property type="taxonomic scope" value="Bacteria"/>
</dbReference>
<dbReference type="HOGENOM" id="CLU_019240_0_0_11"/>
<dbReference type="Proteomes" id="UP000000545">
    <property type="component" value="Chromosome"/>
</dbReference>
<dbReference type="GO" id="GO:0050566">
    <property type="term" value="F:asparaginyl-tRNA synthase (glutamine-hydrolyzing) activity"/>
    <property type="evidence" value="ECO:0007669"/>
    <property type="project" value="RHEA"/>
</dbReference>
<dbReference type="GO" id="GO:0005524">
    <property type="term" value="F:ATP binding"/>
    <property type="evidence" value="ECO:0007669"/>
    <property type="project" value="UniProtKB-KW"/>
</dbReference>
<dbReference type="GO" id="GO:0050567">
    <property type="term" value="F:glutaminyl-tRNA synthase (glutamine-hydrolyzing) activity"/>
    <property type="evidence" value="ECO:0007669"/>
    <property type="project" value="UniProtKB-UniRule"/>
</dbReference>
<dbReference type="GO" id="GO:0070681">
    <property type="term" value="P:glutaminyl-tRNAGln biosynthesis via transamidation"/>
    <property type="evidence" value="ECO:0007669"/>
    <property type="project" value="TreeGrafter"/>
</dbReference>
<dbReference type="GO" id="GO:0006412">
    <property type="term" value="P:translation"/>
    <property type="evidence" value="ECO:0007669"/>
    <property type="project" value="UniProtKB-UniRule"/>
</dbReference>
<dbReference type="FunFam" id="1.10.10.410:FF:000001">
    <property type="entry name" value="Aspartyl/glutamyl-tRNA(Asn/Gln) amidotransferase subunit B"/>
    <property type="match status" value="1"/>
</dbReference>
<dbReference type="Gene3D" id="1.10.10.410">
    <property type="match status" value="1"/>
</dbReference>
<dbReference type="HAMAP" id="MF_00121">
    <property type="entry name" value="GatB"/>
    <property type="match status" value="1"/>
</dbReference>
<dbReference type="InterPro" id="IPR017959">
    <property type="entry name" value="Asn/Gln-tRNA_amidoTrfase_suB/E"/>
</dbReference>
<dbReference type="InterPro" id="IPR006075">
    <property type="entry name" value="Asn/Gln-tRNA_Trfase_suB/E_cat"/>
</dbReference>
<dbReference type="InterPro" id="IPR018027">
    <property type="entry name" value="Asn/Gln_amidotransferase"/>
</dbReference>
<dbReference type="InterPro" id="IPR003789">
    <property type="entry name" value="Asn/Gln_tRNA_amidoTrase-B-like"/>
</dbReference>
<dbReference type="InterPro" id="IPR004413">
    <property type="entry name" value="GatB"/>
</dbReference>
<dbReference type="InterPro" id="IPR023168">
    <property type="entry name" value="GatB_Yqey_C_2"/>
</dbReference>
<dbReference type="InterPro" id="IPR017958">
    <property type="entry name" value="Gln-tRNA_amidoTrfase_suB_CS"/>
</dbReference>
<dbReference type="InterPro" id="IPR014746">
    <property type="entry name" value="Gln_synth/guanido_kin_cat_dom"/>
</dbReference>
<dbReference type="NCBIfam" id="TIGR00133">
    <property type="entry name" value="gatB"/>
    <property type="match status" value="1"/>
</dbReference>
<dbReference type="NCBIfam" id="NF004012">
    <property type="entry name" value="PRK05477.1-2"/>
    <property type="match status" value="1"/>
</dbReference>
<dbReference type="NCBIfam" id="NF004013">
    <property type="entry name" value="PRK05477.1-3"/>
    <property type="match status" value="1"/>
</dbReference>
<dbReference type="NCBIfam" id="NF004014">
    <property type="entry name" value="PRK05477.1-4"/>
    <property type="match status" value="1"/>
</dbReference>
<dbReference type="PANTHER" id="PTHR11659">
    <property type="entry name" value="GLUTAMYL-TRNA GLN AMIDOTRANSFERASE SUBUNIT B MITOCHONDRIAL AND PROKARYOTIC PET112-RELATED"/>
    <property type="match status" value="1"/>
</dbReference>
<dbReference type="PANTHER" id="PTHR11659:SF0">
    <property type="entry name" value="GLUTAMYL-TRNA(GLN) AMIDOTRANSFERASE SUBUNIT B, MITOCHONDRIAL"/>
    <property type="match status" value="1"/>
</dbReference>
<dbReference type="Pfam" id="PF02934">
    <property type="entry name" value="GatB_N"/>
    <property type="match status" value="1"/>
</dbReference>
<dbReference type="Pfam" id="PF02637">
    <property type="entry name" value="GatB_Yqey"/>
    <property type="match status" value="1"/>
</dbReference>
<dbReference type="SMART" id="SM00845">
    <property type="entry name" value="GatB_Yqey"/>
    <property type="match status" value="1"/>
</dbReference>
<dbReference type="SUPFAM" id="SSF89095">
    <property type="entry name" value="GatB/YqeY motif"/>
    <property type="match status" value="1"/>
</dbReference>
<dbReference type="SUPFAM" id="SSF55931">
    <property type="entry name" value="Glutamine synthetase/guanido kinase"/>
    <property type="match status" value="1"/>
</dbReference>
<dbReference type="PROSITE" id="PS01234">
    <property type="entry name" value="GATB"/>
    <property type="match status" value="1"/>
</dbReference>
<keyword id="KW-0067">ATP-binding</keyword>
<keyword id="KW-0436">Ligase</keyword>
<keyword id="KW-0547">Nucleotide-binding</keyword>
<keyword id="KW-0648">Protein biosynthesis</keyword>
<keyword id="KW-1185">Reference proteome</keyword>
<gene>
    <name evidence="1" type="primary">gatB</name>
    <name type="ordered locus">jk1306</name>
</gene>
<comment type="function">
    <text evidence="1">Allows the formation of correctly charged Asn-tRNA(Asn) or Gln-tRNA(Gln) through the transamidation of misacylated Asp-tRNA(Asn) or Glu-tRNA(Gln) in organisms which lack either or both of asparaginyl-tRNA or glutaminyl-tRNA synthetases. The reaction takes place in the presence of glutamine and ATP through an activated phospho-Asp-tRNA(Asn) or phospho-Glu-tRNA(Gln).</text>
</comment>
<comment type="catalytic activity">
    <reaction evidence="1">
        <text>L-glutamyl-tRNA(Gln) + L-glutamine + ATP + H2O = L-glutaminyl-tRNA(Gln) + L-glutamate + ADP + phosphate + H(+)</text>
        <dbReference type="Rhea" id="RHEA:17521"/>
        <dbReference type="Rhea" id="RHEA-COMP:9681"/>
        <dbReference type="Rhea" id="RHEA-COMP:9684"/>
        <dbReference type="ChEBI" id="CHEBI:15377"/>
        <dbReference type="ChEBI" id="CHEBI:15378"/>
        <dbReference type="ChEBI" id="CHEBI:29985"/>
        <dbReference type="ChEBI" id="CHEBI:30616"/>
        <dbReference type="ChEBI" id="CHEBI:43474"/>
        <dbReference type="ChEBI" id="CHEBI:58359"/>
        <dbReference type="ChEBI" id="CHEBI:78520"/>
        <dbReference type="ChEBI" id="CHEBI:78521"/>
        <dbReference type="ChEBI" id="CHEBI:456216"/>
    </reaction>
</comment>
<comment type="catalytic activity">
    <reaction evidence="1">
        <text>L-aspartyl-tRNA(Asn) + L-glutamine + ATP + H2O = L-asparaginyl-tRNA(Asn) + L-glutamate + ADP + phosphate + 2 H(+)</text>
        <dbReference type="Rhea" id="RHEA:14513"/>
        <dbReference type="Rhea" id="RHEA-COMP:9674"/>
        <dbReference type="Rhea" id="RHEA-COMP:9677"/>
        <dbReference type="ChEBI" id="CHEBI:15377"/>
        <dbReference type="ChEBI" id="CHEBI:15378"/>
        <dbReference type="ChEBI" id="CHEBI:29985"/>
        <dbReference type="ChEBI" id="CHEBI:30616"/>
        <dbReference type="ChEBI" id="CHEBI:43474"/>
        <dbReference type="ChEBI" id="CHEBI:58359"/>
        <dbReference type="ChEBI" id="CHEBI:78515"/>
        <dbReference type="ChEBI" id="CHEBI:78516"/>
        <dbReference type="ChEBI" id="CHEBI:456216"/>
    </reaction>
</comment>
<comment type="subunit">
    <text evidence="1">Heterotrimer of A, B and C subunits.</text>
</comment>
<comment type="similarity">
    <text evidence="1">Belongs to the GatB/GatE family. GatB subfamily.</text>
</comment>